<reference key="1">
    <citation type="journal article" date="2004" name="Cell">
        <title>Accelerated evolution of nervous system genes in the origin of Homo sapiens.</title>
        <authorList>
            <person name="Dorus S."/>
            <person name="Vallender E.J."/>
            <person name="Evans P.D."/>
            <person name="Anderson J.R."/>
            <person name="Gilbert S.L."/>
            <person name="Mahowald M."/>
            <person name="Wyckoff G.J."/>
            <person name="Malcom C.M."/>
            <person name="Lahn B.T."/>
        </authorList>
    </citation>
    <scope>NUCLEOTIDE SEQUENCE [MRNA]</scope>
</reference>
<feature type="chain" id="PRO_0000069931" description="Neuropeptide Y receptor type 2">
    <location>
        <begin position="1"/>
        <end position="381"/>
    </location>
</feature>
<feature type="topological domain" description="Extracellular" evidence="2">
    <location>
        <begin position="1"/>
        <end position="51"/>
    </location>
</feature>
<feature type="transmembrane region" description="Helical; Name=1" evidence="2">
    <location>
        <begin position="52"/>
        <end position="72"/>
    </location>
</feature>
<feature type="topological domain" description="Cytoplasmic" evidence="2">
    <location>
        <begin position="73"/>
        <end position="86"/>
    </location>
</feature>
<feature type="transmembrane region" description="Helical; Name=2" evidence="2">
    <location>
        <begin position="87"/>
        <end position="107"/>
    </location>
</feature>
<feature type="topological domain" description="Extracellular" evidence="2">
    <location>
        <begin position="108"/>
        <end position="124"/>
    </location>
</feature>
<feature type="transmembrane region" description="Helical; Name=3" evidence="2">
    <location>
        <begin position="125"/>
        <end position="145"/>
    </location>
</feature>
<feature type="topological domain" description="Cytoplasmic" evidence="2">
    <location>
        <begin position="146"/>
        <end position="165"/>
    </location>
</feature>
<feature type="transmembrane region" description="Helical; Name=4" evidence="2">
    <location>
        <begin position="166"/>
        <end position="186"/>
    </location>
</feature>
<feature type="topological domain" description="Extracellular" evidence="2">
    <location>
        <begin position="187"/>
        <end position="216"/>
    </location>
</feature>
<feature type="transmembrane region" description="Helical; Name=5" evidence="2">
    <location>
        <begin position="217"/>
        <end position="237"/>
    </location>
</feature>
<feature type="topological domain" description="Cytoplasmic" evidence="2">
    <location>
        <begin position="238"/>
        <end position="268"/>
    </location>
</feature>
<feature type="transmembrane region" description="Helical; Name=6" evidence="2">
    <location>
        <begin position="269"/>
        <end position="289"/>
    </location>
</feature>
<feature type="topological domain" description="Extracellular" evidence="2">
    <location>
        <begin position="290"/>
        <end position="304"/>
    </location>
</feature>
<feature type="transmembrane region" description="Helical; Name=7" evidence="2">
    <location>
        <begin position="305"/>
        <end position="325"/>
    </location>
</feature>
<feature type="topological domain" description="Cytoplasmic" evidence="2">
    <location>
        <begin position="326"/>
        <end position="381"/>
    </location>
</feature>
<feature type="region of interest" description="Disordered" evidence="4">
    <location>
        <begin position="1"/>
        <end position="35"/>
    </location>
</feature>
<feature type="lipid moiety-binding region" description="S-palmitoyl cysteine" evidence="2">
    <location>
        <position position="342"/>
    </location>
</feature>
<feature type="glycosylation site" description="N-linked (GlcNAc...) asparagine" evidence="2">
    <location>
        <position position="11"/>
    </location>
</feature>
<feature type="disulfide bond" evidence="3">
    <location>
        <begin position="123"/>
        <end position="203"/>
    </location>
</feature>
<protein>
    <recommendedName>
        <fullName>Neuropeptide Y receptor type 2</fullName>
        <shortName>NPY2-R</shortName>
    </recommendedName>
    <alternativeName>
        <fullName>NPY-Y2 receptor</fullName>
        <shortName>Y2 receptor</shortName>
    </alternativeName>
</protein>
<gene>
    <name type="primary">NPY2R</name>
</gene>
<accession>Q5IS62</accession>
<proteinExistence type="evidence at transcript level"/>
<keyword id="KW-1003">Cell membrane</keyword>
<keyword id="KW-1015">Disulfide bond</keyword>
<keyword id="KW-0297">G-protein coupled receptor</keyword>
<keyword id="KW-0325">Glycoprotein</keyword>
<keyword id="KW-0449">Lipoprotein</keyword>
<keyword id="KW-0472">Membrane</keyword>
<keyword id="KW-0564">Palmitate</keyword>
<keyword id="KW-0675">Receptor</keyword>
<keyword id="KW-1185">Reference proteome</keyword>
<keyword id="KW-0807">Transducer</keyword>
<keyword id="KW-0812">Transmembrane</keyword>
<keyword id="KW-1133">Transmembrane helix</keyword>
<sequence>MGPIGAEADENQTVEEMKVEQYGPQTTPRGELVPDPEPELIDSTKLIEVQVVLILAYCSIILLGVIGNSLVIHVVIKFKSMRTVTNFFIANLAVADLLVNTLCLPFTLTYTLMGEWKMGPVLCHLVPYAQGLAVQVSTITLTVIALDRHRCIVYHLESKISKRISFLIIGLAWGISALLASPLAIFREYSLIEIIPDFEIVACTEKWPGEEKSIYGTVYSLSSLLILYVLPLGIISFSYTRIWSKLKNHVSPGAANDHYHQRRQKTTKMLVCVVVVFAVSWLPLHAFQLAVDIDSQVLDLKEYKLIFTVFHIIAMCSTFANPLLYGWMNSNYRKAFLSAFRCEQRLDAIHSEVSVTFKAKKNLEVRKNSGPNDSFTEATNV</sequence>
<comment type="function">
    <text evidence="1">Receptor for neuropeptide Y and peptide YY.</text>
</comment>
<comment type="subcellular location">
    <subcellularLocation>
        <location evidence="1">Cell membrane</location>
        <topology evidence="1">Multi-pass membrane protein</topology>
    </subcellularLocation>
</comment>
<comment type="similarity">
    <text evidence="3">Belongs to the G-protein coupled receptor 1 family.</text>
</comment>
<dbReference type="EMBL" id="AY665266">
    <property type="protein sequence ID" value="AAV74304.1"/>
    <property type="molecule type" value="mRNA"/>
</dbReference>
<dbReference type="RefSeq" id="NP_001012655.1">
    <property type="nucleotide sequence ID" value="NM_001012637.1"/>
</dbReference>
<dbReference type="RefSeq" id="XP_009446710.1">
    <property type="nucleotide sequence ID" value="XM_009448435.4"/>
</dbReference>
<dbReference type="RefSeq" id="XP_009446711.1">
    <property type="nucleotide sequence ID" value="XM_009448436.5"/>
</dbReference>
<dbReference type="BMRB" id="Q5IS62"/>
<dbReference type="SMR" id="Q5IS62"/>
<dbReference type="FunCoup" id="Q5IS62">
    <property type="interactions" value="787"/>
</dbReference>
<dbReference type="STRING" id="9598.ENSPTRP00000028393"/>
<dbReference type="GlyCosmos" id="Q5IS62">
    <property type="glycosylation" value="1 site, No reported glycans"/>
</dbReference>
<dbReference type="PaxDb" id="9598-ENSPTRP00000028393"/>
<dbReference type="GeneID" id="461562"/>
<dbReference type="KEGG" id="ptr:461562"/>
<dbReference type="CTD" id="4887"/>
<dbReference type="eggNOG" id="KOG3656">
    <property type="taxonomic scope" value="Eukaryota"/>
</dbReference>
<dbReference type="HOGENOM" id="CLU_009579_6_1_1"/>
<dbReference type="InParanoid" id="Q5IS62"/>
<dbReference type="OrthoDB" id="5148at9604"/>
<dbReference type="TreeFam" id="TF315303"/>
<dbReference type="Proteomes" id="UP000002277">
    <property type="component" value="Unplaced"/>
</dbReference>
<dbReference type="GO" id="GO:0005886">
    <property type="term" value="C:plasma membrane"/>
    <property type="evidence" value="ECO:0007669"/>
    <property type="project" value="UniProtKB-SubCell"/>
</dbReference>
<dbReference type="GO" id="GO:0004983">
    <property type="term" value="F:neuropeptide Y receptor activity"/>
    <property type="evidence" value="ECO:0007669"/>
    <property type="project" value="InterPro"/>
</dbReference>
<dbReference type="CDD" id="cd15399">
    <property type="entry name" value="7tmA_NPY2R"/>
    <property type="match status" value="1"/>
</dbReference>
<dbReference type="FunFam" id="1.20.1070.10:FF:000158">
    <property type="entry name" value="Neuropeptide Y receptor type 2"/>
    <property type="match status" value="1"/>
</dbReference>
<dbReference type="Gene3D" id="1.20.1070.10">
    <property type="entry name" value="Rhodopsin 7-helix transmembrane proteins"/>
    <property type="match status" value="1"/>
</dbReference>
<dbReference type="InterPro" id="IPR000276">
    <property type="entry name" value="GPCR_Rhodpsn"/>
</dbReference>
<dbReference type="InterPro" id="IPR017452">
    <property type="entry name" value="GPCR_Rhodpsn_7TM"/>
</dbReference>
<dbReference type="InterPro" id="IPR001358">
    <property type="entry name" value="NPY2_rcpt"/>
</dbReference>
<dbReference type="InterPro" id="IPR000611">
    <property type="entry name" value="NPY_rcpt"/>
</dbReference>
<dbReference type="PANTHER" id="PTHR24235">
    <property type="entry name" value="NEUROPEPTIDE Y RECEPTOR"/>
    <property type="match status" value="1"/>
</dbReference>
<dbReference type="PANTHER" id="PTHR24235:SF20">
    <property type="entry name" value="NEUROPEPTIDE Y RECEPTOR TYPE 2"/>
    <property type="match status" value="1"/>
</dbReference>
<dbReference type="Pfam" id="PF00001">
    <property type="entry name" value="7tm_1"/>
    <property type="match status" value="1"/>
</dbReference>
<dbReference type="PRINTS" id="PR00237">
    <property type="entry name" value="GPCRRHODOPSN"/>
</dbReference>
<dbReference type="PRINTS" id="PR01014">
    <property type="entry name" value="NRPEPTIDEY2R"/>
</dbReference>
<dbReference type="PRINTS" id="PR01012">
    <property type="entry name" value="NRPEPTIDEYR"/>
</dbReference>
<dbReference type="SMART" id="SM01381">
    <property type="entry name" value="7TM_GPCR_Srsx"/>
    <property type="match status" value="1"/>
</dbReference>
<dbReference type="SUPFAM" id="SSF81321">
    <property type="entry name" value="Family A G protein-coupled receptor-like"/>
    <property type="match status" value="1"/>
</dbReference>
<dbReference type="PROSITE" id="PS00237">
    <property type="entry name" value="G_PROTEIN_RECEP_F1_1"/>
    <property type="match status" value="1"/>
</dbReference>
<dbReference type="PROSITE" id="PS50262">
    <property type="entry name" value="G_PROTEIN_RECEP_F1_2"/>
    <property type="match status" value="1"/>
</dbReference>
<name>NPY2R_PANTR</name>
<evidence type="ECO:0000250" key="1"/>
<evidence type="ECO:0000255" key="2"/>
<evidence type="ECO:0000255" key="3">
    <source>
        <dbReference type="PROSITE-ProRule" id="PRU00521"/>
    </source>
</evidence>
<evidence type="ECO:0000256" key="4">
    <source>
        <dbReference type="SAM" id="MobiDB-lite"/>
    </source>
</evidence>
<organism>
    <name type="scientific">Pan troglodytes</name>
    <name type="common">Chimpanzee</name>
    <dbReference type="NCBI Taxonomy" id="9598"/>
    <lineage>
        <taxon>Eukaryota</taxon>
        <taxon>Metazoa</taxon>
        <taxon>Chordata</taxon>
        <taxon>Craniata</taxon>
        <taxon>Vertebrata</taxon>
        <taxon>Euteleostomi</taxon>
        <taxon>Mammalia</taxon>
        <taxon>Eutheria</taxon>
        <taxon>Euarchontoglires</taxon>
        <taxon>Primates</taxon>
        <taxon>Haplorrhini</taxon>
        <taxon>Catarrhini</taxon>
        <taxon>Hominidae</taxon>
        <taxon>Pan</taxon>
    </lineage>
</organism>